<name>GRPE_THISH</name>
<reference key="1">
    <citation type="journal article" date="2011" name="Stand. Genomic Sci.">
        <title>Complete genome sequence of 'Thioalkalivibrio sulfidophilus' HL-EbGr7.</title>
        <authorList>
            <person name="Muyzer G."/>
            <person name="Sorokin D.Y."/>
            <person name="Mavromatis K."/>
            <person name="Lapidus A."/>
            <person name="Clum A."/>
            <person name="Ivanova N."/>
            <person name="Pati A."/>
            <person name="d'Haeseleer P."/>
            <person name="Woyke T."/>
            <person name="Kyrpides N.C."/>
        </authorList>
    </citation>
    <scope>NUCLEOTIDE SEQUENCE [LARGE SCALE GENOMIC DNA]</scope>
    <source>
        <strain>HL-EbGR7</strain>
    </source>
</reference>
<evidence type="ECO:0000255" key="1">
    <source>
        <dbReference type="HAMAP-Rule" id="MF_01151"/>
    </source>
</evidence>
<evidence type="ECO:0000256" key="2">
    <source>
        <dbReference type="SAM" id="MobiDB-lite"/>
    </source>
</evidence>
<organism>
    <name type="scientific">Thioalkalivibrio sulfidiphilus (strain HL-EbGR7)</name>
    <dbReference type="NCBI Taxonomy" id="396588"/>
    <lineage>
        <taxon>Bacteria</taxon>
        <taxon>Pseudomonadati</taxon>
        <taxon>Pseudomonadota</taxon>
        <taxon>Gammaproteobacteria</taxon>
        <taxon>Chromatiales</taxon>
        <taxon>Ectothiorhodospiraceae</taxon>
        <taxon>Thioalkalivibrio</taxon>
    </lineage>
</organism>
<feature type="chain" id="PRO_1000164227" description="Protein GrpE">
    <location>
        <begin position="1"/>
        <end position="187"/>
    </location>
</feature>
<feature type="region of interest" description="Disordered" evidence="2">
    <location>
        <begin position="1"/>
        <end position="27"/>
    </location>
</feature>
<feature type="compositionally biased region" description="Low complexity" evidence="2">
    <location>
        <begin position="1"/>
        <end position="17"/>
    </location>
</feature>
<keyword id="KW-0143">Chaperone</keyword>
<keyword id="KW-0963">Cytoplasm</keyword>
<keyword id="KW-1185">Reference proteome</keyword>
<keyword id="KW-0346">Stress response</keyword>
<gene>
    <name evidence="1" type="primary">grpE</name>
    <name type="ordered locus">Tgr7_0971</name>
</gene>
<protein>
    <recommendedName>
        <fullName evidence="1">Protein GrpE</fullName>
    </recommendedName>
    <alternativeName>
        <fullName evidence="1">HSP-70 cofactor</fullName>
    </alternativeName>
</protein>
<proteinExistence type="inferred from homology"/>
<comment type="function">
    <text evidence="1">Participates actively in the response to hyperosmotic and heat shock by preventing the aggregation of stress-denatured proteins, in association with DnaK and GrpE. It is the nucleotide exchange factor for DnaK and may function as a thermosensor. Unfolded proteins bind initially to DnaJ; upon interaction with the DnaJ-bound protein, DnaK hydrolyzes its bound ATP, resulting in the formation of a stable complex. GrpE releases ADP from DnaK; ATP binding to DnaK triggers the release of the substrate protein, thus completing the reaction cycle. Several rounds of ATP-dependent interactions between DnaJ, DnaK and GrpE are required for fully efficient folding.</text>
</comment>
<comment type="subunit">
    <text evidence="1">Homodimer.</text>
</comment>
<comment type="subcellular location">
    <subcellularLocation>
        <location evidence="1">Cytoplasm</location>
    </subcellularLocation>
</comment>
<comment type="similarity">
    <text evidence="1">Belongs to the GrpE family.</text>
</comment>
<dbReference type="EMBL" id="CP001339">
    <property type="protein sequence ID" value="ACL72059.1"/>
    <property type="molecule type" value="Genomic_DNA"/>
</dbReference>
<dbReference type="RefSeq" id="WP_012637543.1">
    <property type="nucleotide sequence ID" value="NC_011901.1"/>
</dbReference>
<dbReference type="SMR" id="B8GNX0"/>
<dbReference type="STRING" id="396588.Tgr7_0971"/>
<dbReference type="KEGG" id="tgr:Tgr7_0971"/>
<dbReference type="eggNOG" id="COG0576">
    <property type="taxonomic scope" value="Bacteria"/>
</dbReference>
<dbReference type="HOGENOM" id="CLU_057217_6_0_6"/>
<dbReference type="OrthoDB" id="9789811at2"/>
<dbReference type="Proteomes" id="UP000002383">
    <property type="component" value="Chromosome"/>
</dbReference>
<dbReference type="GO" id="GO:0005829">
    <property type="term" value="C:cytosol"/>
    <property type="evidence" value="ECO:0007669"/>
    <property type="project" value="TreeGrafter"/>
</dbReference>
<dbReference type="GO" id="GO:0000774">
    <property type="term" value="F:adenyl-nucleotide exchange factor activity"/>
    <property type="evidence" value="ECO:0007669"/>
    <property type="project" value="InterPro"/>
</dbReference>
<dbReference type="GO" id="GO:0042803">
    <property type="term" value="F:protein homodimerization activity"/>
    <property type="evidence" value="ECO:0007669"/>
    <property type="project" value="InterPro"/>
</dbReference>
<dbReference type="GO" id="GO:0051087">
    <property type="term" value="F:protein-folding chaperone binding"/>
    <property type="evidence" value="ECO:0007669"/>
    <property type="project" value="InterPro"/>
</dbReference>
<dbReference type="GO" id="GO:0051082">
    <property type="term" value="F:unfolded protein binding"/>
    <property type="evidence" value="ECO:0007669"/>
    <property type="project" value="TreeGrafter"/>
</dbReference>
<dbReference type="GO" id="GO:0006457">
    <property type="term" value="P:protein folding"/>
    <property type="evidence" value="ECO:0007669"/>
    <property type="project" value="InterPro"/>
</dbReference>
<dbReference type="CDD" id="cd00446">
    <property type="entry name" value="GrpE"/>
    <property type="match status" value="1"/>
</dbReference>
<dbReference type="FunFam" id="2.30.22.10:FF:000001">
    <property type="entry name" value="Protein GrpE"/>
    <property type="match status" value="1"/>
</dbReference>
<dbReference type="Gene3D" id="3.90.20.20">
    <property type="match status" value="1"/>
</dbReference>
<dbReference type="Gene3D" id="2.30.22.10">
    <property type="entry name" value="Head domain of nucleotide exchange factor GrpE"/>
    <property type="match status" value="1"/>
</dbReference>
<dbReference type="HAMAP" id="MF_01151">
    <property type="entry name" value="GrpE"/>
    <property type="match status" value="1"/>
</dbReference>
<dbReference type="InterPro" id="IPR000740">
    <property type="entry name" value="GrpE"/>
</dbReference>
<dbReference type="InterPro" id="IPR013805">
    <property type="entry name" value="GrpE_coiled_coil"/>
</dbReference>
<dbReference type="InterPro" id="IPR009012">
    <property type="entry name" value="GrpE_head"/>
</dbReference>
<dbReference type="NCBIfam" id="NF010737">
    <property type="entry name" value="PRK14139.1"/>
    <property type="match status" value="1"/>
</dbReference>
<dbReference type="NCBIfam" id="NF010738">
    <property type="entry name" value="PRK14140.1"/>
    <property type="match status" value="1"/>
</dbReference>
<dbReference type="NCBIfam" id="NF010748">
    <property type="entry name" value="PRK14150.1"/>
    <property type="match status" value="1"/>
</dbReference>
<dbReference type="PANTHER" id="PTHR21237">
    <property type="entry name" value="GRPE PROTEIN"/>
    <property type="match status" value="1"/>
</dbReference>
<dbReference type="PANTHER" id="PTHR21237:SF23">
    <property type="entry name" value="GRPE PROTEIN HOMOLOG, MITOCHONDRIAL"/>
    <property type="match status" value="1"/>
</dbReference>
<dbReference type="Pfam" id="PF01025">
    <property type="entry name" value="GrpE"/>
    <property type="match status" value="1"/>
</dbReference>
<dbReference type="PRINTS" id="PR00773">
    <property type="entry name" value="GRPEPROTEIN"/>
</dbReference>
<dbReference type="SUPFAM" id="SSF58014">
    <property type="entry name" value="Coiled-coil domain of nucleotide exchange factor GrpE"/>
    <property type="match status" value="1"/>
</dbReference>
<dbReference type="SUPFAM" id="SSF51064">
    <property type="entry name" value="Head domain of nucleotide exchange factor GrpE"/>
    <property type="match status" value="1"/>
</dbReference>
<dbReference type="PROSITE" id="PS01071">
    <property type="entry name" value="GRPE"/>
    <property type="match status" value="1"/>
</dbReference>
<sequence>MSNEEQQQPNPAAQAPEGAVTEGAAPEFNPAVLLKQLEEAQAQAQEHFDKALRTQAEMENLRKRTARDVENARKFALEKFAGELLAVRDSLEMGLDAARGETDVEKIREGTELTLKMLAQVMEKFGVEAVDPQGQRFDPDRHQAMSMQPNAELEPNTVMAVLQKGYLLNDRLLRPAMVVVSKAPEGE</sequence>
<accession>B8GNX0</accession>